<protein>
    <recommendedName>
        <fullName>Glucan 1,6-alpha-glucosidase</fullName>
        <ecNumber>3.2.1.70</ecNumber>
    </recommendedName>
    <alternativeName>
        <fullName>Dextran glucosidase</fullName>
    </alternativeName>
    <alternativeName>
        <fullName>Exo-1,6-alpha-glucosidase</fullName>
    </alternativeName>
    <alternativeName>
        <fullName>Glucodextranase</fullName>
    </alternativeName>
</protein>
<name>DEXB_STRPN</name>
<reference key="1">
    <citation type="journal article" date="2001" name="Science">
        <title>Complete genome sequence of a virulent isolate of Streptococcus pneumoniae.</title>
        <authorList>
            <person name="Tettelin H."/>
            <person name="Nelson K.E."/>
            <person name="Paulsen I.T."/>
            <person name="Eisen J.A."/>
            <person name="Read T.D."/>
            <person name="Peterson S.N."/>
            <person name="Heidelberg J.F."/>
            <person name="DeBoy R.T."/>
            <person name="Haft D.H."/>
            <person name="Dodson R.J."/>
            <person name="Durkin A.S."/>
            <person name="Gwinn M.L."/>
            <person name="Kolonay J.F."/>
            <person name="Nelson W.C."/>
            <person name="Peterson J.D."/>
            <person name="Umayam L.A."/>
            <person name="White O."/>
            <person name="Salzberg S.L."/>
            <person name="Lewis M.R."/>
            <person name="Radune D."/>
            <person name="Holtzapple E.K."/>
            <person name="Khouri H.M."/>
            <person name="Wolf A.M."/>
            <person name="Utterback T.R."/>
            <person name="Hansen C.L."/>
            <person name="McDonald L.A."/>
            <person name="Feldblyum T.V."/>
            <person name="Angiuoli S.V."/>
            <person name="Dickinson T."/>
            <person name="Hickey E.K."/>
            <person name="Holt I.E."/>
            <person name="Loftus B.J."/>
            <person name="Yang F."/>
            <person name="Smith H.O."/>
            <person name="Venter J.C."/>
            <person name="Dougherty B.A."/>
            <person name="Morrison D.A."/>
            <person name="Hollingshead S.K."/>
            <person name="Fraser C.M."/>
        </authorList>
    </citation>
    <scope>NUCLEOTIDE SEQUENCE [LARGE SCALE GENOMIC DNA]</scope>
    <source>
        <strain>ATCC BAA-334 / TIGR4</strain>
    </source>
</reference>
<reference key="2">
    <citation type="journal article" date="1995" name="Gene">
        <title>Sequence and transcriptional analysis of a DNA region involved in the production of capsular polysaccharide in Streptococcus pneumoniae type 3.</title>
        <authorList>
            <person name="Arrecubieta C."/>
            <person name="Garcia E."/>
            <person name="Lopez R."/>
        </authorList>
    </citation>
    <scope>NUCLEOTIDE SEQUENCE [GENOMIC DNA] OF 305-535</scope>
    <source>
        <strain>406 / Type 3</strain>
    </source>
</reference>
<reference key="3">
    <citation type="journal article" date="1997" name="Mol. Microbiol.">
        <title>Molecular organization of the genes required for the synthesis of type 1 capsular polysaccharide of Streptococcus pneumoniae: formation of binary encapsulated pneumococci and identification of cryptic dTDP-rhamnose biosynthesis genes.</title>
        <authorList>
            <person name="Munoz R."/>
            <person name="Mollerach M.E."/>
            <person name="Lopez R."/>
            <person name="Garcia E."/>
        </authorList>
    </citation>
    <scope>NUCLEOTIDE SEQUENCE [GENOMIC DNA] OF 305-535</scope>
</reference>
<reference key="4">
    <citation type="journal article" date="1994" name="J. Bacteriol.">
        <title>Isolation, characterization, and nucleotide sequence of IS1202, an insertion sequence of Streptococcus pneumoniae.</title>
        <authorList>
            <person name="Morona J.K."/>
            <person name="Guidolin A."/>
            <person name="Morona R."/>
            <person name="Hansman D."/>
            <person name="Paton J.C."/>
        </authorList>
    </citation>
    <scope>NUCLEOTIDE SEQUENCE [GENOMIC DNA] OF 375-535</scope>
    <source>
        <strain>19F / SSZ</strain>
    </source>
</reference>
<reference key="5">
    <citation type="journal article" date="1998" name="Mol. Microbiol.">
        <title>Recombinational exchanges at the capsular polysaccharide biosynthetic locus lead to frequent serotype changes among natural isolates of Streptococcus pneumoniae.</title>
        <authorList>
            <person name="Coffey T.J."/>
            <person name="Enright M.C."/>
            <person name="Daniels M."/>
            <person name="Morona J.K."/>
            <person name="Morona R."/>
            <person name="Hryniewicz W."/>
            <person name="Paton J.C."/>
            <person name="Spratt B.G."/>
        </authorList>
    </citation>
    <scope>NUCLEOTIDE SEQUENCE [GENOMIC DNA] OF 391-535</scope>
    <source>
        <strain>SP-VA92 / Serotype 19F</strain>
        <strain>SP-VA96</strain>
    </source>
</reference>
<reference key="6">
    <citation type="journal article" date="1997" name="Mol. Microbiol.">
        <title>Capsular polysaccharide synthesis in Streptococcus pneumoniae serotype 14: molecular analysis of the complete cps locus and identification of genes encoding glycosyltransferases required for the biosynthesis of the tetrasaccharide subunit.</title>
        <authorList>
            <person name="Kolkman M.A.B."/>
            <person name="Wakarchuk W."/>
            <person name="Nuijten P.J.M."/>
            <person name="van der Zeijst B.A.M."/>
        </authorList>
    </citation>
    <scope>NUCLEOTIDE SEQUENCE [GENOMIC DNA] OF 420-535</scope>
    <source>
        <strain>NCTC 11902 / Serotype 14</strain>
    </source>
</reference>
<comment type="function">
    <text evidence="1">The physiological substrates may be short isomaltosaccharides.</text>
</comment>
<comment type="catalytic activity">
    <reaction>
        <text>Hydrolysis of (1-&gt;6)-alpha-D-glucosidic linkages in (1-&gt;6)-alpha-D-glucans and derived oligosaccharides.</text>
        <dbReference type="EC" id="3.2.1.70"/>
    </reaction>
</comment>
<comment type="subcellular location">
    <subcellularLocation>
        <location evidence="1">Cytoplasm</location>
    </subcellularLocation>
</comment>
<comment type="similarity">
    <text evidence="2">Belongs to the glycosyl hydrolase 13 family.</text>
</comment>
<evidence type="ECO:0000250" key="1"/>
<evidence type="ECO:0000305" key="2"/>
<proteinExistence type="inferred from homology"/>
<sequence length="535" mass="62035">MQEKWWHNAVVYQVYPKSFMDSNGDGVGDLPGITSKLDYLAKLGITAIWLSPVYDSPMDDNGYDIADYQAIAAIFGTMEDMDQLIAEAKKRDIRIIMDLVVNHTSDEHAWFVEACENTDSPERDYYIWRDEPNDLDSIFSGSAWEYDEKSGQYYLHFFSKKQPDLNWENEKLRQKIYEMMNFWIDKGIGGFRMDVIDMIGKIPDEKVVNNGPMLHPYLKEMNQATFGDKDLLTVGETWGATPEIAKFYSDPKGQELSMVFQFEHIGLQYQEGQPKWHYQKELNIAKLKEIFNKWQTELGVEDGWNSLFWNNHDLPRIVSIWGNDQEYREKSAKAFAILLHLMRGTPYIYQGEEIGMTNYPFETLDQVEDIESLNYAREALEKGVPIEEIMDSIRVIGRDNARTPMQWDESKNAGFSTGQPWLAVNPNYEMINVQEALANPDSIFYTYQKLVQIRKENSWLVRADFELLDTADKVFAYIRKDGDRRFLVVANLSNEEQDLTVEGKVKSVLIENTAAKEVLEKQVLAPWDAFCVELL</sequence>
<keyword id="KW-0963">Cytoplasm</keyword>
<keyword id="KW-0326">Glycosidase</keyword>
<keyword id="KW-0378">Hydrolase</keyword>
<keyword id="KW-1185">Reference proteome</keyword>
<dbReference type="EC" id="3.2.1.70"/>
<dbReference type="EMBL" id="AE005672">
    <property type="protein sequence ID" value="AAK74516.1"/>
    <property type="molecule type" value="Genomic_DNA"/>
</dbReference>
<dbReference type="EMBL" id="Z47210">
    <property type="protein sequence ID" value="CAA87400.1"/>
    <property type="molecule type" value="Genomic_DNA"/>
</dbReference>
<dbReference type="EMBL" id="Z83335">
    <property type="protein sequence ID" value="CAB05933.1"/>
    <property type="molecule type" value="Genomic_DNA"/>
</dbReference>
<dbReference type="EMBL" id="U04047">
    <property type="protein sequence ID" value="AAA21853.1"/>
    <property type="molecule type" value="Genomic_DNA"/>
</dbReference>
<dbReference type="EMBL" id="AF030367">
    <property type="protein sequence ID" value="AAC38714.1"/>
    <property type="molecule type" value="Genomic_DNA"/>
</dbReference>
<dbReference type="EMBL" id="AF030368">
    <property type="protein sequence ID" value="AAC38720.1"/>
    <property type="molecule type" value="Genomic_DNA"/>
</dbReference>
<dbReference type="EMBL" id="AF030369">
    <property type="protein sequence ID" value="AAC38725.1"/>
    <property type="molecule type" value="Genomic_DNA"/>
</dbReference>
<dbReference type="EMBL" id="AF030370">
    <property type="protein sequence ID" value="AAC38729.1"/>
    <property type="molecule type" value="Genomic_DNA"/>
</dbReference>
<dbReference type="EMBL" id="AF030371">
    <property type="protein sequence ID" value="AAC38734.1"/>
    <property type="molecule type" value="Genomic_DNA"/>
</dbReference>
<dbReference type="EMBL" id="AF030372">
    <property type="protein sequence ID" value="AAC38739.1"/>
    <property type="molecule type" value="Genomic_DNA"/>
</dbReference>
<dbReference type="EMBL" id="AF030374">
    <property type="protein sequence ID" value="AAC38763.1"/>
    <property type="molecule type" value="Genomic_DNA"/>
</dbReference>
<dbReference type="EMBL" id="X85787">
    <property type="protein sequence ID" value="CAA59784.1"/>
    <property type="molecule type" value="Genomic_DNA"/>
</dbReference>
<dbReference type="PIR" id="C95040">
    <property type="entry name" value="C95040"/>
</dbReference>
<dbReference type="PIR" id="T50029">
    <property type="entry name" value="T50029"/>
</dbReference>
<dbReference type="RefSeq" id="WP_001156825.1">
    <property type="nucleotide sequence ID" value="NC_003028.3"/>
</dbReference>
<dbReference type="SMR" id="Q54796"/>
<dbReference type="CAZy" id="GH13">
    <property type="family name" value="Glycoside Hydrolase Family 13"/>
</dbReference>
<dbReference type="PaxDb" id="170187-SP_0342"/>
<dbReference type="EnsemblBacteria" id="AAK74516">
    <property type="protein sequence ID" value="AAK74516"/>
    <property type="gene ID" value="SP_0342"/>
</dbReference>
<dbReference type="KEGG" id="spn:SP_0342"/>
<dbReference type="eggNOG" id="COG0366">
    <property type="taxonomic scope" value="Bacteria"/>
</dbReference>
<dbReference type="PhylomeDB" id="Q54796"/>
<dbReference type="BioCyc" id="SPNE170187:G1FZB-351-MONOMER"/>
<dbReference type="Proteomes" id="UP000000585">
    <property type="component" value="Chromosome"/>
</dbReference>
<dbReference type="GO" id="GO:0005737">
    <property type="term" value="C:cytoplasm"/>
    <property type="evidence" value="ECO:0007669"/>
    <property type="project" value="UniProtKB-SubCell"/>
</dbReference>
<dbReference type="GO" id="GO:0004556">
    <property type="term" value="F:alpha-amylase activity"/>
    <property type="evidence" value="ECO:0007669"/>
    <property type="project" value="TreeGrafter"/>
</dbReference>
<dbReference type="GO" id="GO:0043896">
    <property type="term" value="F:glucan 1,6-alpha-glucosidase activity"/>
    <property type="evidence" value="ECO:0007669"/>
    <property type="project" value="UniProtKB-EC"/>
</dbReference>
<dbReference type="GO" id="GO:0009313">
    <property type="term" value="P:oligosaccharide catabolic process"/>
    <property type="evidence" value="ECO:0007669"/>
    <property type="project" value="TreeGrafter"/>
</dbReference>
<dbReference type="CDD" id="cd11333">
    <property type="entry name" value="AmyAc_SI_OligoGlu_DGase"/>
    <property type="match status" value="1"/>
</dbReference>
<dbReference type="FunFam" id="3.20.20.80:FF:000064">
    <property type="entry name" value="Oligo-1,6-glucosidase"/>
    <property type="match status" value="2"/>
</dbReference>
<dbReference type="FunFam" id="3.90.400.10:FF:000002">
    <property type="entry name" value="Sucrose isomerase"/>
    <property type="match status" value="1"/>
</dbReference>
<dbReference type="Gene3D" id="3.20.20.80">
    <property type="entry name" value="Glycosidases"/>
    <property type="match status" value="1"/>
</dbReference>
<dbReference type="Gene3D" id="2.60.40.1180">
    <property type="entry name" value="Golgi alpha-mannosidase II"/>
    <property type="match status" value="1"/>
</dbReference>
<dbReference type="Gene3D" id="3.90.400.10">
    <property type="entry name" value="Oligo-1,6-glucosidase, Domain 2"/>
    <property type="match status" value="1"/>
</dbReference>
<dbReference type="InterPro" id="IPR006047">
    <property type="entry name" value="Glyco_hydro_13_cat_dom"/>
</dbReference>
<dbReference type="InterPro" id="IPR013780">
    <property type="entry name" value="Glyco_hydro_b"/>
</dbReference>
<dbReference type="InterPro" id="IPR017853">
    <property type="entry name" value="Glycoside_hydrolase_SF"/>
</dbReference>
<dbReference type="InterPro" id="IPR032091">
    <property type="entry name" value="Malt_amylase-like_C"/>
</dbReference>
<dbReference type="InterPro" id="IPR045857">
    <property type="entry name" value="O16G_dom_2"/>
</dbReference>
<dbReference type="NCBIfam" id="NF008183">
    <property type="entry name" value="PRK10933.1"/>
    <property type="match status" value="1"/>
</dbReference>
<dbReference type="PANTHER" id="PTHR10357">
    <property type="entry name" value="ALPHA-AMYLASE FAMILY MEMBER"/>
    <property type="match status" value="1"/>
</dbReference>
<dbReference type="PANTHER" id="PTHR10357:SF179">
    <property type="entry name" value="NEUTRAL AND BASIC AMINO ACID TRANSPORT PROTEIN RBAT"/>
    <property type="match status" value="1"/>
</dbReference>
<dbReference type="Pfam" id="PF00128">
    <property type="entry name" value="Alpha-amylase"/>
    <property type="match status" value="1"/>
</dbReference>
<dbReference type="Pfam" id="PF16657">
    <property type="entry name" value="Malt_amylase_C"/>
    <property type="match status" value="1"/>
</dbReference>
<dbReference type="SMART" id="SM00642">
    <property type="entry name" value="Aamy"/>
    <property type="match status" value="1"/>
</dbReference>
<dbReference type="SUPFAM" id="SSF51445">
    <property type="entry name" value="(Trans)glycosidases"/>
    <property type="match status" value="1"/>
</dbReference>
<dbReference type="SUPFAM" id="SSF51011">
    <property type="entry name" value="Glycosyl hydrolase domain"/>
    <property type="match status" value="1"/>
</dbReference>
<feature type="chain" id="PRO_0000054340" description="Glucan 1,6-alpha-glucosidase">
    <location>
        <begin position="1"/>
        <end position="535"/>
    </location>
</feature>
<feature type="active site" description="Nucleophile" evidence="1">
    <location>
        <position position="194"/>
    </location>
</feature>
<feature type="active site" description="Proton donor" evidence="1">
    <location>
        <position position="236"/>
    </location>
</feature>
<feature type="site" description="Transition state stabilizer" evidence="1">
    <location>
        <position position="313"/>
    </location>
</feature>
<feature type="sequence variant" description="In strain: 406 / Type 3, 19F and SP-VA96.">
    <original>V</original>
    <variation>I</variation>
    <location>
        <position position="461"/>
    </location>
</feature>
<feature type="sequence conflict" description="In Ref. 4; AAA21853." evidence="2" ref="4">
    <original>YAREALE</original>
    <variation>MRVRLLK</variation>
    <location>
        <begin position="375"/>
        <end position="381"/>
    </location>
</feature>
<feature type="sequence conflict" description="In Ref. 2; CAA87400." evidence="2" ref="2">
    <original>A</original>
    <variation>P</variation>
    <location>
        <position position="376"/>
    </location>
</feature>
<feature type="sequence conflict" description="In Ref. 5; AAC38725/AAC38739." evidence="2" ref="5">
    <original>G</original>
    <variation>D</variation>
    <location>
        <position position="418"/>
    </location>
</feature>
<feature type="sequence conflict" description="In Ref. 2; CAA87400, 3; CAB05933, 4; AAA21853 and 5; AAC38714/AAC38720/AAC38725/AAC38729/AAC38734/AAC38739/AAC38763." evidence="2" ref="2 3 4 5">
    <original>AAKEVL</original>
    <variation>LAQEVF</variation>
    <location>
        <begin position="514"/>
        <end position="519"/>
    </location>
</feature>
<feature type="sequence conflict" description="In Ref. 2; CAA87400, 3; CAB05933, 4; AAA21853 and 5; AAC38714/AAC38720/AAC38725/AAC38729/AAC38734/AAC38739/AAC38763." evidence="2" ref="2 3 4 5">
    <original>VLA</original>
    <variation>ILV</variation>
    <location>
        <begin position="523"/>
        <end position="525"/>
    </location>
</feature>
<accession>Q54796</accession>
<accession>O07337</accession>
<accession>O54522</accession>
<accession>P96472</accession>
<accession>Q54514</accession>
<gene>
    <name type="primary">dexB</name>
    <name type="ordered locus">SP_0342</name>
</gene>
<organism>
    <name type="scientific">Streptococcus pneumoniae serotype 4 (strain ATCC BAA-334 / TIGR4)</name>
    <dbReference type="NCBI Taxonomy" id="170187"/>
    <lineage>
        <taxon>Bacteria</taxon>
        <taxon>Bacillati</taxon>
        <taxon>Bacillota</taxon>
        <taxon>Bacilli</taxon>
        <taxon>Lactobacillales</taxon>
        <taxon>Streptococcaceae</taxon>
        <taxon>Streptococcus</taxon>
    </lineage>
</organism>